<accession>C1CVF4</accession>
<reference key="1">
    <citation type="journal article" date="2009" name="PLoS Genet.">
        <title>Alliance of proteomics and genomics to unravel the specificities of Sahara bacterium Deinococcus deserti.</title>
        <authorList>
            <person name="de Groot A."/>
            <person name="Dulermo R."/>
            <person name="Ortet P."/>
            <person name="Blanchard L."/>
            <person name="Guerin P."/>
            <person name="Fernandez B."/>
            <person name="Vacherie B."/>
            <person name="Dossat C."/>
            <person name="Jolivet E."/>
            <person name="Siguier P."/>
            <person name="Chandler M."/>
            <person name="Barakat M."/>
            <person name="Dedieu A."/>
            <person name="Barbe V."/>
            <person name="Heulin T."/>
            <person name="Sommer S."/>
            <person name="Achouak W."/>
            <person name="Armengaud J."/>
        </authorList>
    </citation>
    <scope>NUCLEOTIDE SEQUENCE [LARGE SCALE GENOMIC DNA]</scope>
    <source>
        <strain>DSM 17065 / CIP 109153 / LMG 22923 / VCD115</strain>
    </source>
</reference>
<protein>
    <recommendedName>
        <fullName evidence="1">DNA gyrase subunit A</fullName>
        <ecNumber evidence="1">5.6.2.2</ecNumber>
    </recommendedName>
</protein>
<keyword id="KW-0067">ATP-binding</keyword>
<keyword id="KW-0963">Cytoplasm</keyword>
<keyword id="KW-0238">DNA-binding</keyword>
<keyword id="KW-0413">Isomerase</keyword>
<keyword id="KW-0547">Nucleotide-binding</keyword>
<keyword id="KW-1185">Reference proteome</keyword>
<keyword id="KW-0799">Topoisomerase</keyword>
<gene>
    <name evidence="1" type="primary">gyrA</name>
    <name type="ordered locus">Deide_12520</name>
</gene>
<comment type="function">
    <text evidence="1">A type II topoisomerase that negatively supercoils closed circular double-stranded (ds) DNA in an ATP-dependent manner to modulate DNA topology and maintain chromosomes in an underwound state. Negative supercoiling favors strand separation, and DNA replication, transcription, recombination and repair, all of which involve strand separation. Also able to catalyze the interconversion of other topological isomers of dsDNA rings, including catenanes and knotted rings. Type II topoisomerases break and join 2 DNA strands simultaneously in an ATP-dependent manner.</text>
</comment>
<comment type="catalytic activity">
    <reaction evidence="1">
        <text>ATP-dependent breakage, passage and rejoining of double-stranded DNA.</text>
        <dbReference type="EC" id="5.6.2.2"/>
    </reaction>
</comment>
<comment type="subunit">
    <text evidence="1">Heterotetramer, composed of two GyrA and two GyrB chains. In the heterotetramer, GyrA contains the active site tyrosine that forms a transient covalent intermediate with DNA, while GyrB binds cofactors and catalyzes ATP hydrolysis.</text>
</comment>
<comment type="subcellular location">
    <subcellularLocation>
        <location evidence="1">Cytoplasm</location>
    </subcellularLocation>
</comment>
<comment type="miscellaneous">
    <text evidence="1">Few gyrases are as efficient as E.coli at forming negative supercoils. Not all organisms have 2 type II topoisomerases; in organisms with a single type II topoisomerase this enzyme also has to decatenate newly replicated chromosomes.</text>
</comment>
<comment type="similarity">
    <text evidence="1">Belongs to the type II topoisomerase GyrA/ParC subunit family.</text>
</comment>
<feature type="chain" id="PRO_0000409824" description="DNA gyrase subunit A">
    <location>
        <begin position="1"/>
        <end position="811"/>
    </location>
</feature>
<feature type="domain" description="Topo IIA-type catalytic" evidence="2">
    <location>
        <begin position="30"/>
        <end position="493"/>
    </location>
</feature>
<feature type="short sequence motif" description="GyrA-box" evidence="1">
    <location>
        <begin position="520"/>
        <end position="526"/>
    </location>
</feature>
<feature type="active site" description="O-(5'-phospho-DNA)-tyrosine intermediate" evidence="1">
    <location>
        <position position="118"/>
    </location>
</feature>
<proteinExistence type="inferred from homology"/>
<organism>
    <name type="scientific">Deinococcus deserti (strain DSM 17065 / CIP 109153 / LMG 22923 / VCD115)</name>
    <dbReference type="NCBI Taxonomy" id="546414"/>
    <lineage>
        <taxon>Bacteria</taxon>
        <taxon>Thermotogati</taxon>
        <taxon>Deinococcota</taxon>
        <taxon>Deinococci</taxon>
        <taxon>Deinococcales</taxon>
        <taxon>Deinococcaceae</taxon>
        <taxon>Deinococcus</taxon>
    </lineage>
</organism>
<dbReference type="EC" id="5.6.2.2" evidence="1"/>
<dbReference type="EMBL" id="CP001114">
    <property type="protein sequence ID" value="ACO46171.1"/>
    <property type="molecule type" value="Genomic_DNA"/>
</dbReference>
<dbReference type="RefSeq" id="WP_012693294.1">
    <property type="nucleotide sequence ID" value="NC_012526.1"/>
</dbReference>
<dbReference type="SMR" id="C1CVF4"/>
<dbReference type="STRING" id="546414.Deide_12520"/>
<dbReference type="PaxDb" id="546414-Deide_12520"/>
<dbReference type="KEGG" id="ddr:Deide_12520"/>
<dbReference type="eggNOG" id="COG0188">
    <property type="taxonomic scope" value="Bacteria"/>
</dbReference>
<dbReference type="HOGENOM" id="CLU_002977_6_1_0"/>
<dbReference type="OrthoDB" id="9806486at2"/>
<dbReference type="Proteomes" id="UP000002208">
    <property type="component" value="Chromosome"/>
</dbReference>
<dbReference type="GO" id="GO:0005694">
    <property type="term" value="C:chromosome"/>
    <property type="evidence" value="ECO:0007669"/>
    <property type="project" value="InterPro"/>
</dbReference>
<dbReference type="GO" id="GO:0005737">
    <property type="term" value="C:cytoplasm"/>
    <property type="evidence" value="ECO:0007669"/>
    <property type="project" value="UniProtKB-SubCell"/>
</dbReference>
<dbReference type="GO" id="GO:0009330">
    <property type="term" value="C:DNA topoisomerase type II (double strand cut, ATP-hydrolyzing) complex"/>
    <property type="evidence" value="ECO:0007669"/>
    <property type="project" value="TreeGrafter"/>
</dbReference>
<dbReference type="GO" id="GO:0005524">
    <property type="term" value="F:ATP binding"/>
    <property type="evidence" value="ECO:0007669"/>
    <property type="project" value="UniProtKB-UniRule"/>
</dbReference>
<dbReference type="GO" id="GO:0003677">
    <property type="term" value="F:DNA binding"/>
    <property type="evidence" value="ECO:0007669"/>
    <property type="project" value="UniProtKB-UniRule"/>
</dbReference>
<dbReference type="GO" id="GO:0034335">
    <property type="term" value="F:DNA negative supercoiling activity"/>
    <property type="evidence" value="ECO:0007669"/>
    <property type="project" value="UniProtKB-ARBA"/>
</dbReference>
<dbReference type="GO" id="GO:0006265">
    <property type="term" value="P:DNA topological change"/>
    <property type="evidence" value="ECO:0007669"/>
    <property type="project" value="UniProtKB-UniRule"/>
</dbReference>
<dbReference type="GO" id="GO:0006261">
    <property type="term" value="P:DNA-templated DNA replication"/>
    <property type="evidence" value="ECO:0007669"/>
    <property type="project" value="UniProtKB-UniRule"/>
</dbReference>
<dbReference type="CDD" id="cd00187">
    <property type="entry name" value="TOP4c"/>
    <property type="match status" value="1"/>
</dbReference>
<dbReference type="FunFam" id="1.10.268.10:FF:000001">
    <property type="entry name" value="DNA gyrase subunit A"/>
    <property type="match status" value="1"/>
</dbReference>
<dbReference type="FunFam" id="3.30.1360.40:FF:000002">
    <property type="entry name" value="DNA gyrase subunit A"/>
    <property type="match status" value="1"/>
</dbReference>
<dbReference type="FunFam" id="3.90.199.10:FF:000001">
    <property type="entry name" value="DNA gyrase subunit A"/>
    <property type="match status" value="1"/>
</dbReference>
<dbReference type="FunFam" id="2.120.10.90:FF:000005">
    <property type="entry name" value="DNA topoisomerase 4 subunit A"/>
    <property type="match status" value="1"/>
</dbReference>
<dbReference type="Gene3D" id="3.30.1360.40">
    <property type="match status" value="1"/>
</dbReference>
<dbReference type="Gene3D" id="2.120.10.90">
    <property type="entry name" value="DNA gyrase/topoisomerase IV, subunit A, C-terminal"/>
    <property type="match status" value="1"/>
</dbReference>
<dbReference type="Gene3D" id="3.90.199.10">
    <property type="entry name" value="Topoisomerase II, domain 5"/>
    <property type="match status" value="1"/>
</dbReference>
<dbReference type="Gene3D" id="1.10.268.10">
    <property type="entry name" value="Topoisomerase, domain 3"/>
    <property type="match status" value="1"/>
</dbReference>
<dbReference type="HAMAP" id="MF_01897">
    <property type="entry name" value="GyrA"/>
    <property type="match status" value="1"/>
</dbReference>
<dbReference type="InterPro" id="IPR005743">
    <property type="entry name" value="GyrA"/>
</dbReference>
<dbReference type="InterPro" id="IPR006691">
    <property type="entry name" value="GyrA/parC_rep"/>
</dbReference>
<dbReference type="InterPro" id="IPR035516">
    <property type="entry name" value="Gyrase/topoIV_suA_C"/>
</dbReference>
<dbReference type="InterPro" id="IPR013760">
    <property type="entry name" value="Topo_IIA-like_dom_sf"/>
</dbReference>
<dbReference type="InterPro" id="IPR013758">
    <property type="entry name" value="Topo_IIA_A/C_ab"/>
</dbReference>
<dbReference type="InterPro" id="IPR013757">
    <property type="entry name" value="Topo_IIA_A_a_sf"/>
</dbReference>
<dbReference type="InterPro" id="IPR002205">
    <property type="entry name" value="Topo_IIA_dom_A"/>
</dbReference>
<dbReference type="InterPro" id="IPR050220">
    <property type="entry name" value="Type_II_DNA_Topoisomerases"/>
</dbReference>
<dbReference type="NCBIfam" id="TIGR01063">
    <property type="entry name" value="gyrA"/>
    <property type="match status" value="1"/>
</dbReference>
<dbReference type="NCBIfam" id="NF004043">
    <property type="entry name" value="PRK05560.1"/>
    <property type="match status" value="1"/>
</dbReference>
<dbReference type="NCBIfam" id="NF004044">
    <property type="entry name" value="PRK05561.1"/>
    <property type="match status" value="1"/>
</dbReference>
<dbReference type="PANTHER" id="PTHR43493:SF5">
    <property type="entry name" value="DNA GYRASE SUBUNIT A, CHLOROPLASTIC_MITOCHONDRIAL"/>
    <property type="match status" value="1"/>
</dbReference>
<dbReference type="PANTHER" id="PTHR43493">
    <property type="entry name" value="DNA GYRASE/TOPOISOMERASE SUBUNIT A"/>
    <property type="match status" value="1"/>
</dbReference>
<dbReference type="Pfam" id="PF03989">
    <property type="entry name" value="DNA_gyraseA_C"/>
    <property type="match status" value="6"/>
</dbReference>
<dbReference type="Pfam" id="PF00521">
    <property type="entry name" value="DNA_topoisoIV"/>
    <property type="match status" value="1"/>
</dbReference>
<dbReference type="SMART" id="SM00434">
    <property type="entry name" value="TOP4c"/>
    <property type="match status" value="1"/>
</dbReference>
<dbReference type="SUPFAM" id="SSF101904">
    <property type="entry name" value="GyrA/ParC C-terminal domain-like"/>
    <property type="match status" value="1"/>
</dbReference>
<dbReference type="SUPFAM" id="SSF56719">
    <property type="entry name" value="Type II DNA topoisomerase"/>
    <property type="match status" value="1"/>
</dbReference>
<dbReference type="PROSITE" id="PS52040">
    <property type="entry name" value="TOPO_IIA"/>
    <property type="match status" value="1"/>
</dbReference>
<sequence>MTGIHPVDITSEVKTNFINYAMNVIVDRALPDVRDGLKPVQRRIMYAMLLEGLYSNQKHAKSASVVGEVMKKYHPHGDSSIYDAMVRLAQWWNMRYPMVHPQGNFGSIDGDPPAAMRYTEARMTKVAEELIADLEKETVDLKPNYDETTEEPSVLPAAVPNLLINGATGIAVGMATNIPPHNLTEICNGLLAMIDDPNLTLDGLMEHVTGPDFPTGGRITKTGIREAYATGHSGLKVRGKARIEEKNGRNQIIISEIPYQVNKTNLIQTISAMYKAGKIPDISALRDESDRKDPVRIVVELKRGAIPTLVLNQLYKYTQLQTTYTVINLSIVGGEPRVLPLLNTMQYFLDHRADVVTRRTRYDLRKAEERAHVLEGLLKALDHIDEVISLIRGSNTGAEARDALMVRFGLTEIQSQAILDMRLQRLVGLEREKLQAEFDELQKTIEYLRSILGDEKLLWREIKKEIRAIRDNYGDERRSTITELEEDIGKEDLIAVEDMVITMTKAGYLKRTKLDAYRAQGRGGRGSSGGKLREEDVNTRVFVGSTHDYLLFFTDQGRVFHEKIYDLPEAGRDAKGTHIRNLLPSLREDENIASVLSVGGFDEPGCFIFATRKGVVKKTLITEYGNITSAGLIAINLQPGDELIGVGIVNDIDHVVLATRNGKAMRFESDEVRATGRATQGVIGIRLREGEDDAVVSMALVPGGDEASELLAVSECGLGKRTPVGDYPAKGRGGMGVITLDVTEKTGKLVTLARVAGNEELMVLTEKGTVIRTRVEEVRVTGRNAQGVKVINIAERDSVISAFPIRREDEL</sequence>
<name>GYRA_DEIDV</name>
<evidence type="ECO:0000255" key="1">
    <source>
        <dbReference type="HAMAP-Rule" id="MF_01897"/>
    </source>
</evidence>
<evidence type="ECO:0000255" key="2">
    <source>
        <dbReference type="PROSITE-ProRule" id="PRU01384"/>
    </source>
</evidence>